<comment type="function">
    <text evidence="1">Binds to the 23S rRNA.</text>
</comment>
<comment type="subunit">
    <text evidence="1">Part of the 50S ribosomal subunit.</text>
</comment>
<comment type="similarity">
    <text evidence="1">Belongs to the universal ribosomal protein uL15 family.</text>
</comment>
<sequence length="169" mass="17394">MKLNEIRDNEGATKARMRVGRGIGSGKGKTGGRGVKGQKARSGVSIKGFEGGQMPLHRRLPKRGFNNIHAHDLNEVNLGRVQQAVDAGKLDANAAVTVEALVKAGIISRARDGVKLLGVGELTSKLSFEVTRASKSAIEAVEKAGGSVTTTFAAGVAHRGAAEGAVASA</sequence>
<feature type="chain" id="PRO_1000166304" description="Large ribosomal subunit protein uL15">
    <location>
        <begin position="1"/>
        <end position="169"/>
    </location>
</feature>
<feature type="region of interest" description="Disordered" evidence="2">
    <location>
        <begin position="20"/>
        <end position="56"/>
    </location>
</feature>
<feature type="compositionally biased region" description="Gly residues" evidence="2">
    <location>
        <begin position="21"/>
        <end position="35"/>
    </location>
</feature>
<gene>
    <name evidence="1" type="primary">rplO</name>
    <name type="ordered locus">Mchl_2460</name>
</gene>
<proteinExistence type="inferred from homology"/>
<dbReference type="EMBL" id="CP001298">
    <property type="protein sequence ID" value="ACK83302.1"/>
    <property type="molecule type" value="Genomic_DNA"/>
</dbReference>
<dbReference type="RefSeq" id="WP_012253650.1">
    <property type="nucleotide sequence ID" value="NC_011757.1"/>
</dbReference>
<dbReference type="SMR" id="B7L0T1"/>
<dbReference type="KEGG" id="mch:Mchl_2460"/>
<dbReference type="HOGENOM" id="CLU_055188_4_0_5"/>
<dbReference type="Proteomes" id="UP000002385">
    <property type="component" value="Chromosome"/>
</dbReference>
<dbReference type="GO" id="GO:0022625">
    <property type="term" value="C:cytosolic large ribosomal subunit"/>
    <property type="evidence" value="ECO:0007669"/>
    <property type="project" value="TreeGrafter"/>
</dbReference>
<dbReference type="GO" id="GO:0019843">
    <property type="term" value="F:rRNA binding"/>
    <property type="evidence" value="ECO:0007669"/>
    <property type="project" value="UniProtKB-UniRule"/>
</dbReference>
<dbReference type="GO" id="GO:0003735">
    <property type="term" value="F:structural constituent of ribosome"/>
    <property type="evidence" value="ECO:0007669"/>
    <property type="project" value="InterPro"/>
</dbReference>
<dbReference type="GO" id="GO:0006412">
    <property type="term" value="P:translation"/>
    <property type="evidence" value="ECO:0007669"/>
    <property type="project" value="UniProtKB-UniRule"/>
</dbReference>
<dbReference type="Gene3D" id="3.100.10.10">
    <property type="match status" value="1"/>
</dbReference>
<dbReference type="HAMAP" id="MF_01341">
    <property type="entry name" value="Ribosomal_uL15"/>
    <property type="match status" value="1"/>
</dbReference>
<dbReference type="InterPro" id="IPR030878">
    <property type="entry name" value="Ribosomal_uL15"/>
</dbReference>
<dbReference type="InterPro" id="IPR021131">
    <property type="entry name" value="Ribosomal_uL15/eL18"/>
</dbReference>
<dbReference type="InterPro" id="IPR036227">
    <property type="entry name" value="Ribosomal_uL15/eL18_sf"/>
</dbReference>
<dbReference type="InterPro" id="IPR005749">
    <property type="entry name" value="Ribosomal_uL15_bac-type"/>
</dbReference>
<dbReference type="InterPro" id="IPR001196">
    <property type="entry name" value="Ribosomal_uL15_CS"/>
</dbReference>
<dbReference type="NCBIfam" id="TIGR01071">
    <property type="entry name" value="rplO_bact"/>
    <property type="match status" value="1"/>
</dbReference>
<dbReference type="PANTHER" id="PTHR12934">
    <property type="entry name" value="50S RIBOSOMAL PROTEIN L15"/>
    <property type="match status" value="1"/>
</dbReference>
<dbReference type="PANTHER" id="PTHR12934:SF11">
    <property type="entry name" value="LARGE RIBOSOMAL SUBUNIT PROTEIN UL15M"/>
    <property type="match status" value="1"/>
</dbReference>
<dbReference type="Pfam" id="PF00828">
    <property type="entry name" value="Ribosomal_L27A"/>
    <property type="match status" value="1"/>
</dbReference>
<dbReference type="SUPFAM" id="SSF52080">
    <property type="entry name" value="Ribosomal proteins L15p and L18e"/>
    <property type="match status" value="1"/>
</dbReference>
<dbReference type="PROSITE" id="PS00475">
    <property type="entry name" value="RIBOSOMAL_L15"/>
    <property type="match status" value="1"/>
</dbReference>
<keyword id="KW-0687">Ribonucleoprotein</keyword>
<keyword id="KW-0689">Ribosomal protein</keyword>
<keyword id="KW-0694">RNA-binding</keyword>
<keyword id="KW-0699">rRNA-binding</keyword>
<protein>
    <recommendedName>
        <fullName evidence="1">Large ribosomal subunit protein uL15</fullName>
    </recommendedName>
    <alternativeName>
        <fullName evidence="3">50S ribosomal protein L15</fullName>
    </alternativeName>
</protein>
<name>RL15_METC4</name>
<accession>B7L0T1</accession>
<reference key="1">
    <citation type="submission" date="2008-12" db="EMBL/GenBank/DDBJ databases">
        <title>Complete sequence of chromosome of Methylobacterium chloromethanicum CM4.</title>
        <authorList>
            <consortium name="US DOE Joint Genome Institute"/>
            <person name="Lucas S."/>
            <person name="Copeland A."/>
            <person name="Lapidus A."/>
            <person name="Glavina del Rio T."/>
            <person name="Dalin E."/>
            <person name="Tice H."/>
            <person name="Bruce D."/>
            <person name="Goodwin L."/>
            <person name="Pitluck S."/>
            <person name="Chertkov O."/>
            <person name="Brettin T."/>
            <person name="Detter J.C."/>
            <person name="Han C."/>
            <person name="Larimer F."/>
            <person name="Land M."/>
            <person name="Hauser L."/>
            <person name="Kyrpides N."/>
            <person name="Mikhailova N."/>
            <person name="Marx C."/>
            <person name="Richardson P."/>
        </authorList>
    </citation>
    <scope>NUCLEOTIDE SEQUENCE [LARGE SCALE GENOMIC DNA]</scope>
    <source>
        <strain>CM4 / NCIMB 13688</strain>
    </source>
</reference>
<evidence type="ECO:0000255" key="1">
    <source>
        <dbReference type="HAMAP-Rule" id="MF_01341"/>
    </source>
</evidence>
<evidence type="ECO:0000256" key="2">
    <source>
        <dbReference type="SAM" id="MobiDB-lite"/>
    </source>
</evidence>
<evidence type="ECO:0000305" key="3"/>
<organism>
    <name type="scientific">Methylorubrum extorquens (strain CM4 / NCIMB 13688)</name>
    <name type="common">Methylobacterium extorquens</name>
    <dbReference type="NCBI Taxonomy" id="440085"/>
    <lineage>
        <taxon>Bacteria</taxon>
        <taxon>Pseudomonadati</taxon>
        <taxon>Pseudomonadota</taxon>
        <taxon>Alphaproteobacteria</taxon>
        <taxon>Hyphomicrobiales</taxon>
        <taxon>Methylobacteriaceae</taxon>
        <taxon>Methylorubrum</taxon>
    </lineage>
</organism>